<sequence length="1174" mass="130049">MAAQEDRLDSFGMQHGILLSSSPSLQPPYNHQEYAWDFQRYLNKLQSLRPSDSESFRTEINLLLDQLISQDYTPGVTGIGQEEVCAILVQACRLVQHNQEHLVSKVCQLVHYLLNRLQVIVDEQNLDFLLAFSISALKQCSSWTHADVLHALAALVYNNGSKCQKYLNELLGPTGILVNLCDPSQPDPELWREAIHCMANLCLGVPGHPYLDEPYRMTCFKNFLTVLQTPKPNIVDDIAVCTLLQNALKGIQSLLNGSKIKLLETGQLGSLLAVLKKYMFHGLPGLSIEMPTVLYPTPLAQYDGRSPTKPEQPEAAVNQPTWSKKKRKAGKQKKGHQGEESKEELKNEIGAEINKDLEKMKLCSGEAQHSLYLGPQKSPLDPHQGQVGKDHFSPQVQRYKKINSSDSEYSDAEGSLQNKIRSFQAKVRQGALSCFLSTIKSIEKKVLYGYWSAFVPDISGIGSPQSVSLMTIALKDSSPKTRACALQVLSAILDGSKQFLSVADDASDHKRAFTPLSVTLASSIRELHRCLLLAIVAESSAQTLTQIIKCLANLVSNAPYHRLKPGLLTRVWNQIKPYIRNKDVNVRVSSLTLLGAIVSAQVSLPEVQLLLQQPLYSLSQNSGSATPSDPESNRKESMLEGGKKNGLHSEHSQSCWLIRLCITLVVEPREDSYSDSEPSSTPAVMYEPSPVRLEALQVLACLVKGCFNMAQSYLIELGEVACKCMQETDASIQLHGAKLLEELGTGIVQQQKPDSIVPINLMVPINQAVTFWNMILNGPLPAALQNEQHPTLQTSACDALSSVLPEAFSNLPNDRQILCITLLLGLNHSENPLVKAAAARALGVYILFPCLRQDVMFVADTANAILMCLSDRSPNVRAKAAWSLGNLTDSLIVNMEAMGQSFQEEFSDMLLLKMLWAATEASKDKDKVKSNAVRALGNLLHFLQPYHIVKPRFCESIECAIQALVSTVLGDGTMKVKWNACYALGNVFKNTALPLGKATWTAAAYNALTTVVKACKNFKVRIKSAMALSIPFSREQYGSTEQYCDIWNALVTALQKSEDTEDFLEFKYSASLREQICQALIHLLSLASQEDLPRIRKTLLEKGDSIRNYVLHYVKSEVQGDESQREHQDRGKMLQRAIEHIRGFEELPGSNKGLIEVAYFEAILVSCDKEMEAL</sequence>
<gene>
    <name type="primary">heatr6</name>
</gene>
<organism>
    <name type="scientific">Xenopus laevis</name>
    <name type="common">African clawed frog</name>
    <dbReference type="NCBI Taxonomy" id="8355"/>
    <lineage>
        <taxon>Eukaryota</taxon>
        <taxon>Metazoa</taxon>
        <taxon>Chordata</taxon>
        <taxon>Craniata</taxon>
        <taxon>Vertebrata</taxon>
        <taxon>Euteleostomi</taxon>
        <taxon>Amphibia</taxon>
        <taxon>Batrachia</taxon>
        <taxon>Anura</taxon>
        <taxon>Pipoidea</taxon>
        <taxon>Pipidae</taxon>
        <taxon>Xenopodinae</taxon>
        <taxon>Xenopus</taxon>
        <taxon>Xenopus</taxon>
    </lineage>
</organism>
<feature type="chain" id="PRO_0000337178" description="HEAT repeat-containing protein 6">
    <location>
        <begin position="1"/>
        <end position="1174"/>
    </location>
</feature>
<feature type="repeat" description="HEAT 1">
    <location>
        <begin position="168"/>
        <end position="207"/>
    </location>
</feature>
<feature type="repeat" description="HEAT 2">
    <location>
        <begin position="460"/>
        <end position="498"/>
    </location>
</feature>
<feature type="repeat" description="HEAT 3">
    <location>
        <begin position="523"/>
        <end position="560"/>
    </location>
</feature>
<feature type="repeat" description="HEAT 4">
    <location>
        <begin position="566"/>
        <end position="603"/>
    </location>
</feature>
<feature type="region of interest" description="Disordered" evidence="1">
    <location>
        <begin position="304"/>
        <end position="346"/>
    </location>
</feature>
<feature type="region of interest" description="Disordered" evidence="1">
    <location>
        <begin position="373"/>
        <end position="392"/>
    </location>
</feature>
<feature type="region of interest" description="Disordered" evidence="1">
    <location>
        <begin position="619"/>
        <end position="648"/>
    </location>
</feature>
<feature type="compositionally biased region" description="Basic residues" evidence="1">
    <location>
        <begin position="323"/>
        <end position="335"/>
    </location>
</feature>
<feature type="compositionally biased region" description="Basic and acidic residues" evidence="1">
    <location>
        <begin position="336"/>
        <end position="346"/>
    </location>
</feature>
<feature type="compositionally biased region" description="Basic and acidic residues" evidence="1">
    <location>
        <begin position="631"/>
        <end position="648"/>
    </location>
</feature>
<evidence type="ECO:0000256" key="1">
    <source>
        <dbReference type="SAM" id="MobiDB-lite"/>
    </source>
</evidence>
<keyword id="KW-1185">Reference proteome</keyword>
<keyword id="KW-0677">Repeat</keyword>
<accession>Q7ZY56</accession>
<protein>
    <recommendedName>
        <fullName>HEAT repeat-containing protein 6</fullName>
    </recommendedName>
</protein>
<reference key="1">
    <citation type="submission" date="2003-01" db="EMBL/GenBank/DDBJ databases">
        <authorList>
            <consortium name="NIH - Xenopus Gene Collection (XGC) project"/>
        </authorList>
    </citation>
    <scope>NUCLEOTIDE SEQUENCE [LARGE SCALE MRNA]</scope>
    <source>
        <tissue>Embryo</tissue>
    </source>
</reference>
<dbReference type="EMBL" id="BC043967">
    <property type="protein sequence ID" value="AAH43967.1"/>
    <property type="molecule type" value="mRNA"/>
</dbReference>
<dbReference type="RefSeq" id="NP_001079513.1">
    <property type="nucleotide sequence ID" value="NM_001086044.1"/>
</dbReference>
<dbReference type="DNASU" id="379200"/>
<dbReference type="GeneID" id="379200"/>
<dbReference type="KEGG" id="xla:379200"/>
<dbReference type="AGR" id="Xenbase:XB-GENE-5772487"/>
<dbReference type="CTD" id="379200"/>
<dbReference type="Xenbase" id="XB-GENE-5772487">
    <property type="gene designation" value="heatr6.S"/>
</dbReference>
<dbReference type="OMA" id="NIWDMEI"/>
<dbReference type="OrthoDB" id="66533at2759"/>
<dbReference type="Proteomes" id="UP000186698">
    <property type="component" value="Chromosome 2S"/>
</dbReference>
<dbReference type="Bgee" id="379200">
    <property type="expression patterns" value="Expressed in oocyte and 19 other cell types or tissues"/>
</dbReference>
<dbReference type="Gene3D" id="1.25.10.10">
    <property type="entry name" value="Leucine-rich Repeat Variant"/>
    <property type="match status" value="4"/>
</dbReference>
<dbReference type="InterPro" id="IPR011989">
    <property type="entry name" value="ARM-like"/>
</dbReference>
<dbReference type="InterPro" id="IPR016024">
    <property type="entry name" value="ARM-type_fold"/>
</dbReference>
<dbReference type="InterPro" id="IPR025283">
    <property type="entry name" value="DUF4042"/>
</dbReference>
<dbReference type="InterPro" id="IPR052107">
    <property type="entry name" value="HEAT6"/>
</dbReference>
<dbReference type="PANTHER" id="PTHR13366:SF0">
    <property type="entry name" value="HEAT REPEAT-CONTAINING PROTEIN 6"/>
    <property type="match status" value="1"/>
</dbReference>
<dbReference type="PANTHER" id="PTHR13366">
    <property type="entry name" value="MALARIA ANTIGEN-RELATED"/>
    <property type="match status" value="1"/>
</dbReference>
<dbReference type="Pfam" id="PF13251">
    <property type="entry name" value="DUF4042"/>
    <property type="match status" value="1"/>
</dbReference>
<dbReference type="Pfam" id="PF13513">
    <property type="entry name" value="HEAT_EZ"/>
    <property type="match status" value="1"/>
</dbReference>
<dbReference type="SUPFAM" id="SSF48371">
    <property type="entry name" value="ARM repeat"/>
    <property type="match status" value="2"/>
</dbReference>
<proteinExistence type="evidence at transcript level"/>
<name>HEAT6_XENLA</name>